<accession>Q12VF9</accession>
<protein>
    <recommendedName>
        <fullName evidence="1">Probable thymidylate kinase</fullName>
        <ecNumber evidence="1">2.7.4.9</ecNumber>
    </recommendedName>
    <alternativeName>
        <fullName evidence="1">dTMP kinase</fullName>
    </alternativeName>
</protein>
<dbReference type="EC" id="2.7.4.9" evidence="1"/>
<dbReference type="EMBL" id="CP000300">
    <property type="protein sequence ID" value="ABE52567.1"/>
    <property type="molecule type" value="Genomic_DNA"/>
</dbReference>
<dbReference type="RefSeq" id="WP_011499710.1">
    <property type="nucleotide sequence ID" value="NC_007955.1"/>
</dbReference>
<dbReference type="SMR" id="Q12VF9"/>
<dbReference type="STRING" id="259564.Mbur_1673"/>
<dbReference type="GeneID" id="3998069"/>
<dbReference type="KEGG" id="mbu:Mbur_1673"/>
<dbReference type="HOGENOM" id="CLU_049131_0_2_2"/>
<dbReference type="OrthoDB" id="43083at2157"/>
<dbReference type="Proteomes" id="UP000001979">
    <property type="component" value="Chromosome"/>
</dbReference>
<dbReference type="GO" id="GO:0005737">
    <property type="term" value="C:cytoplasm"/>
    <property type="evidence" value="ECO:0007669"/>
    <property type="project" value="TreeGrafter"/>
</dbReference>
<dbReference type="GO" id="GO:0005524">
    <property type="term" value="F:ATP binding"/>
    <property type="evidence" value="ECO:0007669"/>
    <property type="project" value="UniProtKB-UniRule"/>
</dbReference>
<dbReference type="GO" id="GO:0004798">
    <property type="term" value="F:dTMP kinase activity"/>
    <property type="evidence" value="ECO:0007669"/>
    <property type="project" value="UniProtKB-UniRule"/>
</dbReference>
<dbReference type="GO" id="GO:0006233">
    <property type="term" value="P:dTDP biosynthetic process"/>
    <property type="evidence" value="ECO:0007669"/>
    <property type="project" value="InterPro"/>
</dbReference>
<dbReference type="GO" id="GO:0006235">
    <property type="term" value="P:dTTP biosynthetic process"/>
    <property type="evidence" value="ECO:0007669"/>
    <property type="project" value="UniProtKB-UniRule"/>
</dbReference>
<dbReference type="GO" id="GO:0006227">
    <property type="term" value="P:dUDP biosynthetic process"/>
    <property type="evidence" value="ECO:0007669"/>
    <property type="project" value="TreeGrafter"/>
</dbReference>
<dbReference type="CDD" id="cd01672">
    <property type="entry name" value="TMPK"/>
    <property type="match status" value="1"/>
</dbReference>
<dbReference type="FunFam" id="3.40.50.300:FF:000225">
    <property type="entry name" value="Thymidylate kinase"/>
    <property type="match status" value="1"/>
</dbReference>
<dbReference type="Gene3D" id="3.40.50.300">
    <property type="entry name" value="P-loop containing nucleotide triphosphate hydrolases"/>
    <property type="match status" value="1"/>
</dbReference>
<dbReference type="HAMAP" id="MF_00165">
    <property type="entry name" value="Thymidylate_kinase"/>
    <property type="match status" value="1"/>
</dbReference>
<dbReference type="InterPro" id="IPR027417">
    <property type="entry name" value="P-loop_NTPase"/>
</dbReference>
<dbReference type="InterPro" id="IPR039430">
    <property type="entry name" value="Thymidylate_kin-like_dom"/>
</dbReference>
<dbReference type="InterPro" id="IPR018094">
    <property type="entry name" value="Thymidylate_kinase"/>
</dbReference>
<dbReference type="NCBIfam" id="TIGR00041">
    <property type="entry name" value="DTMP_kinase"/>
    <property type="match status" value="1"/>
</dbReference>
<dbReference type="PANTHER" id="PTHR10344">
    <property type="entry name" value="THYMIDYLATE KINASE"/>
    <property type="match status" value="1"/>
</dbReference>
<dbReference type="PANTHER" id="PTHR10344:SF4">
    <property type="entry name" value="UMP-CMP KINASE 2, MITOCHONDRIAL"/>
    <property type="match status" value="1"/>
</dbReference>
<dbReference type="Pfam" id="PF02223">
    <property type="entry name" value="Thymidylate_kin"/>
    <property type="match status" value="1"/>
</dbReference>
<dbReference type="SUPFAM" id="SSF52540">
    <property type="entry name" value="P-loop containing nucleoside triphosphate hydrolases"/>
    <property type="match status" value="1"/>
</dbReference>
<keyword id="KW-0067">ATP-binding</keyword>
<keyword id="KW-0418">Kinase</keyword>
<keyword id="KW-0545">Nucleotide biosynthesis</keyword>
<keyword id="KW-0547">Nucleotide-binding</keyword>
<keyword id="KW-0808">Transferase</keyword>
<comment type="catalytic activity">
    <reaction evidence="1">
        <text>dTMP + ATP = dTDP + ADP</text>
        <dbReference type="Rhea" id="RHEA:13517"/>
        <dbReference type="ChEBI" id="CHEBI:30616"/>
        <dbReference type="ChEBI" id="CHEBI:58369"/>
        <dbReference type="ChEBI" id="CHEBI:63528"/>
        <dbReference type="ChEBI" id="CHEBI:456216"/>
        <dbReference type="EC" id="2.7.4.9"/>
    </reaction>
</comment>
<comment type="similarity">
    <text evidence="1">Belongs to the thymidylate kinase family.</text>
</comment>
<sequence length="201" mass="22833">MKGKLITLEGIDGSGKSTITRFLNSHPAFANAVFTKEPTTSWIGDAVYKAIQSDTDELAELMLFTADHADHISTLIRPAIEEGKIVISDRYSDSRYAYQGVTLKERMEEPMEWIQMIHRGWTIIPDLTLLFDIDPAVAVQRCGKRGEQTKFEKTDLLKGVRENYLKLAEKEPERFVVIDTDRDLKEIEKDVLQAITSIIES</sequence>
<gene>
    <name evidence="1" type="primary">tmk</name>
    <name type="ordered locus">Mbur_1673</name>
</gene>
<reference key="1">
    <citation type="journal article" date="2009" name="ISME J.">
        <title>The genome sequence of the psychrophilic archaeon, Methanococcoides burtonii: the role of genome evolution in cold adaptation.</title>
        <authorList>
            <person name="Allen M.A."/>
            <person name="Lauro F.M."/>
            <person name="Williams T.J."/>
            <person name="Burg D."/>
            <person name="Siddiqui K.S."/>
            <person name="De Francisci D."/>
            <person name="Chong K.W."/>
            <person name="Pilak O."/>
            <person name="Chew H.H."/>
            <person name="De Maere M.Z."/>
            <person name="Ting L."/>
            <person name="Katrib M."/>
            <person name="Ng C."/>
            <person name="Sowers K.R."/>
            <person name="Galperin M.Y."/>
            <person name="Anderson I.J."/>
            <person name="Ivanova N."/>
            <person name="Dalin E."/>
            <person name="Martinez M."/>
            <person name="Lapidus A."/>
            <person name="Hauser L."/>
            <person name="Land M."/>
            <person name="Thomas T."/>
            <person name="Cavicchioli R."/>
        </authorList>
    </citation>
    <scope>NUCLEOTIDE SEQUENCE [LARGE SCALE GENOMIC DNA]</scope>
    <source>
        <strain>DSM 6242 / NBRC 107633 / OCM 468 / ACE-M</strain>
    </source>
</reference>
<evidence type="ECO:0000255" key="1">
    <source>
        <dbReference type="HAMAP-Rule" id="MF_00165"/>
    </source>
</evidence>
<organism>
    <name type="scientific">Methanococcoides burtonii (strain DSM 6242 / NBRC 107633 / OCM 468 / ACE-M)</name>
    <dbReference type="NCBI Taxonomy" id="259564"/>
    <lineage>
        <taxon>Archaea</taxon>
        <taxon>Methanobacteriati</taxon>
        <taxon>Methanobacteriota</taxon>
        <taxon>Stenosarchaea group</taxon>
        <taxon>Methanomicrobia</taxon>
        <taxon>Methanosarcinales</taxon>
        <taxon>Methanosarcinaceae</taxon>
        <taxon>Methanococcoides</taxon>
    </lineage>
</organism>
<name>KTHY_METBU</name>
<feature type="chain" id="PRO_1000076968" description="Probable thymidylate kinase">
    <location>
        <begin position="1"/>
        <end position="201"/>
    </location>
</feature>
<feature type="binding site" evidence="1">
    <location>
        <begin position="10"/>
        <end position="17"/>
    </location>
    <ligand>
        <name>ATP</name>
        <dbReference type="ChEBI" id="CHEBI:30616"/>
    </ligand>
</feature>
<proteinExistence type="inferred from homology"/>